<keyword id="KW-0007">Acetylation</keyword>
<keyword id="KW-0025">Alternative splicing</keyword>
<keyword id="KW-0131">Cell cycle</keyword>
<keyword id="KW-0132">Cell division</keyword>
<keyword id="KW-0963">Cytoplasm</keyword>
<keyword id="KW-0206">Cytoskeleton</keyword>
<keyword id="KW-0493">Microtubule</keyword>
<keyword id="KW-0498">Mitosis</keyword>
<keyword id="KW-0597">Phosphoprotein</keyword>
<keyword id="KW-1267">Proteomics identification</keyword>
<keyword id="KW-1185">Reference proteome</keyword>
<keyword id="KW-0832">Ubl conjugation</keyword>
<reference key="1">
    <citation type="journal article" date="1997" name="J. Immunol.">
        <title>RP1, a new member of the adenomatous polyposis coli-binding EB1-like gene family, is differentially expressed in activated T cells.</title>
        <authorList>
            <person name="Renner C."/>
            <person name="Pfitzenmeier J.-P."/>
            <person name="Gerlach K."/>
            <person name="Held G."/>
            <person name="Ohnesorge S."/>
            <person name="Sahin U."/>
            <person name="Bauer S."/>
            <person name="Pfreundschuh M."/>
        </authorList>
    </citation>
    <scope>NUCLEOTIDE SEQUENCE [MRNA] (ISOFORM 1)</scope>
    <scope>INDUCTION</scope>
    <scope>TISSUE SPECIFICITY</scope>
    <scope>INTERACTION WITH APC</scope>
</reference>
<reference key="2">
    <citation type="submission" date="1998-08" db="EMBL/GenBank/DDBJ databases">
        <title>RP1, a member of the APC-binding EB1 family, alternative form.</title>
        <authorList>
            <person name="Oishi N."/>
        </authorList>
    </citation>
    <scope>NUCLEOTIDE SEQUENCE [MRNA] (ISOFORM 2)</scope>
    <source>
        <tissue>Brain</tissue>
    </source>
</reference>
<reference key="3">
    <citation type="submission" date="2004-06" db="EMBL/GenBank/DDBJ databases">
        <title>Cloning of human full open reading frames in Gateway(TM) system entry vector (pDONR201).</title>
        <authorList>
            <person name="Halleck A."/>
            <person name="Ebert L."/>
            <person name="Mkoundinya M."/>
            <person name="Schick M."/>
            <person name="Eisenstein S."/>
            <person name="Neubert P."/>
            <person name="Kstrang K."/>
            <person name="Schatten R."/>
            <person name="Shen B."/>
            <person name="Henze S."/>
            <person name="Mar W."/>
            <person name="Korn B."/>
            <person name="Zuo D."/>
            <person name="Hu Y."/>
            <person name="LaBaer J."/>
        </authorList>
    </citation>
    <scope>NUCLEOTIDE SEQUENCE [LARGE SCALE MRNA] (ISOFORM 1)</scope>
</reference>
<reference key="4">
    <citation type="submission" date="2004-10" db="EMBL/GenBank/DDBJ databases">
        <title>Cloning of human full-length CDSs in BD Creator(TM) system donor vector.</title>
        <authorList>
            <person name="Kalnine N."/>
            <person name="Chen X."/>
            <person name="Rolfs A."/>
            <person name="Halleck A."/>
            <person name="Hines L."/>
            <person name="Eisenstein S."/>
            <person name="Koundinya M."/>
            <person name="Raphael J."/>
            <person name="Moreira D."/>
            <person name="Kelley T."/>
            <person name="LaBaer J."/>
            <person name="Lin Y."/>
            <person name="Phelan M."/>
            <person name="Farmer A."/>
        </authorList>
    </citation>
    <scope>NUCLEOTIDE SEQUENCE [LARGE SCALE MRNA] (ISOFORM 1)</scope>
</reference>
<reference key="5">
    <citation type="journal article" date="2004" name="Nat. Genet.">
        <title>Complete sequencing and characterization of 21,243 full-length human cDNAs.</title>
        <authorList>
            <person name="Ota T."/>
            <person name="Suzuki Y."/>
            <person name="Nishikawa T."/>
            <person name="Otsuki T."/>
            <person name="Sugiyama T."/>
            <person name="Irie R."/>
            <person name="Wakamatsu A."/>
            <person name="Hayashi K."/>
            <person name="Sato H."/>
            <person name="Nagai K."/>
            <person name="Kimura K."/>
            <person name="Makita H."/>
            <person name="Sekine M."/>
            <person name="Obayashi M."/>
            <person name="Nishi T."/>
            <person name="Shibahara T."/>
            <person name="Tanaka T."/>
            <person name="Ishii S."/>
            <person name="Yamamoto J."/>
            <person name="Saito K."/>
            <person name="Kawai Y."/>
            <person name="Isono Y."/>
            <person name="Nakamura Y."/>
            <person name="Nagahari K."/>
            <person name="Murakami K."/>
            <person name="Yasuda T."/>
            <person name="Iwayanagi T."/>
            <person name="Wagatsuma M."/>
            <person name="Shiratori A."/>
            <person name="Sudo H."/>
            <person name="Hosoiri T."/>
            <person name="Kaku Y."/>
            <person name="Kodaira H."/>
            <person name="Kondo H."/>
            <person name="Sugawara M."/>
            <person name="Takahashi M."/>
            <person name="Kanda K."/>
            <person name="Yokoi T."/>
            <person name="Furuya T."/>
            <person name="Kikkawa E."/>
            <person name="Omura Y."/>
            <person name="Abe K."/>
            <person name="Kamihara K."/>
            <person name="Katsuta N."/>
            <person name="Sato K."/>
            <person name="Tanikawa M."/>
            <person name="Yamazaki M."/>
            <person name="Ninomiya K."/>
            <person name="Ishibashi T."/>
            <person name="Yamashita H."/>
            <person name="Murakawa K."/>
            <person name="Fujimori K."/>
            <person name="Tanai H."/>
            <person name="Kimata M."/>
            <person name="Watanabe M."/>
            <person name="Hiraoka S."/>
            <person name="Chiba Y."/>
            <person name="Ishida S."/>
            <person name="Ono Y."/>
            <person name="Takiguchi S."/>
            <person name="Watanabe S."/>
            <person name="Yosida M."/>
            <person name="Hotuta T."/>
            <person name="Kusano J."/>
            <person name="Kanehori K."/>
            <person name="Takahashi-Fujii A."/>
            <person name="Hara H."/>
            <person name="Tanase T.-O."/>
            <person name="Nomura Y."/>
            <person name="Togiya S."/>
            <person name="Komai F."/>
            <person name="Hara R."/>
            <person name="Takeuchi K."/>
            <person name="Arita M."/>
            <person name="Imose N."/>
            <person name="Musashino K."/>
            <person name="Yuuki H."/>
            <person name="Oshima A."/>
            <person name="Sasaki N."/>
            <person name="Aotsuka S."/>
            <person name="Yoshikawa Y."/>
            <person name="Matsunawa H."/>
            <person name="Ichihara T."/>
            <person name="Shiohata N."/>
            <person name="Sano S."/>
            <person name="Moriya S."/>
            <person name="Momiyama H."/>
            <person name="Satoh N."/>
            <person name="Takami S."/>
            <person name="Terashima Y."/>
            <person name="Suzuki O."/>
            <person name="Nakagawa S."/>
            <person name="Senoh A."/>
            <person name="Mizoguchi H."/>
            <person name="Goto Y."/>
            <person name="Shimizu F."/>
            <person name="Wakebe H."/>
            <person name="Hishigaki H."/>
            <person name="Watanabe T."/>
            <person name="Sugiyama A."/>
            <person name="Takemoto M."/>
            <person name="Kawakami B."/>
            <person name="Yamazaki M."/>
            <person name="Watanabe K."/>
            <person name="Kumagai A."/>
            <person name="Itakura S."/>
            <person name="Fukuzumi Y."/>
            <person name="Fujimori Y."/>
            <person name="Komiyama M."/>
            <person name="Tashiro H."/>
            <person name="Tanigami A."/>
            <person name="Fujiwara T."/>
            <person name="Ono T."/>
            <person name="Yamada K."/>
            <person name="Fujii Y."/>
            <person name="Ozaki K."/>
            <person name="Hirao M."/>
            <person name="Ohmori Y."/>
            <person name="Kawabata A."/>
            <person name="Hikiji T."/>
            <person name="Kobatake N."/>
            <person name="Inagaki H."/>
            <person name="Ikema Y."/>
            <person name="Okamoto S."/>
            <person name="Okitani R."/>
            <person name="Kawakami T."/>
            <person name="Noguchi S."/>
            <person name="Itoh T."/>
            <person name="Shigeta K."/>
            <person name="Senba T."/>
            <person name="Matsumura K."/>
            <person name="Nakajima Y."/>
            <person name="Mizuno T."/>
            <person name="Morinaga M."/>
            <person name="Sasaki M."/>
            <person name="Togashi T."/>
            <person name="Oyama M."/>
            <person name="Hata H."/>
            <person name="Watanabe M."/>
            <person name="Komatsu T."/>
            <person name="Mizushima-Sugano J."/>
            <person name="Satoh T."/>
            <person name="Shirai Y."/>
            <person name="Takahashi Y."/>
            <person name="Nakagawa K."/>
            <person name="Okumura K."/>
            <person name="Nagase T."/>
            <person name="Nomura N."/>
            <person name="Kikuchi H."/>
            <person name="Masuho Y."/>
            <person name="Yamashita R."/>
            <person name="Nakai K."/>
            <person name="Yada T."/>
            <person name="Nakamura Y."/>
            <person name="Ohara O."/>
            <person name="Isogai T."/>
            <person name="Sugano S."/>
        </authorList>
    </citation>
    <scope>NUCLEOTIDE SEQUENCE [LARGE SCALE MRNA] (ISOFORMS 1; 3; 4 AND 5)</scope>
    <source>
        <tissue>Amygdala</tissue>
        <tissue>Brain</tissue>
        <tissue>Trachea</tissue>
    </source>
</reference>
<reference key="6">
    <citation type="journal article" date="2005" name="Nature">
        <title>DNA sequence and analysis of human chromosome 18.</title>
        <authorList>
            <person name="Nusbaum C."/>
            <person name="Zody M.C."/>
            <person name="Borowsky M.L."/>
            <person name="Kamal M."/>
            <person name="Kodira C.D."/>
            <person name="Taylor T.D."/>
            <person name="Whittaker C.A."/>
            <person name="Chang J.L."/>
            <person name="Cuomo C.A."/>
            <person name="Dewar K."/>
            <person name="FitzGerald M.G."/>
            <person name="Yang X."/>
            <person name="Abouelleil A."/>
            <person name="Allen N.R."/>
            <person name="Anderson S."/>
            <person name="Bloom T."/>
            <person name="Bugalter B."/>
            <person name="Butler J."/>
            <person name="Cook A."/>
            <person name="DeCaprio D."/>
            <person name="Engels R."/>
            <person name="Garber M."/>
            <person name="Gnirke A."/>
            <person name="Hafez N."/>
            <person name="Hall J.L."/>
            <person name="Norman C.H."/>
            <person name="Itoh T."/>
            <person name="Jaffe D.B."/>
            <person name="Kuroki Y."/>
            <person name="Lehoczky J."/>
            <person name="Lui A."/>
            <person name="Macdonald P."/>
            <person name="Mauceli E."/>
            <person name="Mikkelsen T.S."/>
            <person name="Naylor J.W."/>
            <person name="Nicol R."/>
            <person name="Nguyen C."/>
            <person name="Noguchi H."/>
            <person name="O'Leary S.B."/>
            <person name="Piqani B."/>
            <person name="Smith C.L."/>
            <person name="Talamas J.A."/>
            <person name="Topham K."/>
            <person name="Totoki Y."/>
            <person name="Toyoda A."/>
            <person name="Wain H.M."/>
            <person name="Young S.K."/>
            <person name="Zeng Q."/>
            <person name="Zimmer A.R."/>
            <person name="Fujiyama A."/>
            <person name="Hattori M."/>
            <person name="Birren B.W."/>
            <person name="Sakaki Y."/>
            <person name="Lander E.S."/>
        </authorList>
    </citation>
    <scope>NUCLEOTIDE SEQUENCE [LARGE SCALE GENOMIC DNA]</scope>
</reference>
<reference key="7">
    <citation type="submission" date="2005-07" db="EMBL/GenBank/DDBJ databases">
        <authorList>
            <person name="Mural R.J."/>
            <person name="Istrail S."/>
            <person name="Sutton G.G."/>
            <person name="Florea L."/>
            <person name="Halpern A.L."/>
            <person name="Mobarry C.M."/>
            <person name="Lippert R."/>
            <person name="Walenz B."/>
            <person name="Shatkay H."/>
            <person name="Dew I."/>
            <person name="Miller J.R."/>
            <person name="Flanigan M.J."/>
            <person name="Edwards N.J."/>
            <person name="Bolanos R."/>
            <person name="Fasulo D."/>
            <person name="Halldorsson B.V."/>
            <person name="Hannenhalli S."/>
            <person name="Turner R."/>
            <person name="Yooseph S."/>
            <person name="Lu F."/>
            <person name="Nusskern D.R."/>
            <person name="Shue B.C."/>
            <person name="Zheng X.H."/>
            <person name="Zhong F."/>
            <person name="Delcher A.L."/>
            <person name="Huson D.H."/>
            <person name="Kravitz S.A."/>
            <person name="Mouchard L."/>
            <person name="Reinert K."/>
            <person name="Remington K.A."/>
            <person name="Clark A.G."/>
            <person name="Waterman M.S."/>
            <person name="Eichler E.E."/>
            <person name="Adams M.D."/>
            <person name="Hunkapiller M.W."/>
            <person name="Myers E.W."/>
            <person name="Venter J.C."/>
        </authorList>
    </citation>
    <scope>NUCLEOTIDE SEQUENCE [LARGE SCALE GENOMIC DNA]</scope>
</reference>
<reference key="8">
    <citation type="journal article" date="2004" name="Genome Res.">
        <title>The status, quality, and expansion of the NIH full-length cDNA project: the Mammalian Gene Collection (MGC).</title>
        <authorList>
            <consortium name="The MGC Project Team"/>
        </authorList>
    </citation>
    <scope>NUCLEOTIDE SEQUENCE [LARGE SCALE MRNA] (ISOFORM 1)</scope>
    <source>
        <tissue>Lymph</tissue>
    </source>
</reference>
<reference key="9">
    <citation type="journal article" date="1999" name="Int. J. Cancer">
        <title>EB/RP gene family encodes tubulin binding proteins.</title>
        <authorList>
            <person name="Juwana J.-P."/>
            <person name="Henderikx P."/>
            <person name="Mischo A."/>
            <person name="Wadle A."/>
            <person name="Fadle N."/>
            <person name="Gerlach K."/>
            <person name="Arends J.W."/>
            <person name="Hoogenboom H."/>
            <person name="Pfreundschuh M."/>
            <person name="Renner C."/>
        </authorList>
    </citation>
    <scope>INTERACTION WITH TUBULIN</scope>
    <scope>SUBCELLULAR LOCATION</scope>
</reference>
<reference key="10">
    <citation type="journal article" date="2003" name="J. Biol. Chem.">
        <title>Characterization of functional domains of human EB1 family proteins.</title>
        <authorList>
            <person name="Bu W."/>
            <person name="Su L.-K."/>
        </authorList>
    </citation>
    <scope>CHARACTERIZATION</scope>
    <scope>INTERACTION WITH TUBULIN; APC AND DCTN1</scope>
</reference>
<reference key="11">
    <citation type="journal article" date="2005" name="Int. J. Cancer">
        <title>Characterization of Hap/BAG-1 variants as RP1 binding proteins with antiapoptotic activity.</title>
        <authorList>
            <person name="Wadle A."/>
            <person name="Mischo A."/>
            <person name="Henrich P.P."/>
            <person name="Stenner-Lieven F."/>
            <person name="Scherer C."/>
            <person name="Imig J."/>
            <person name="Petersen G."/>
            <person name="Pfreundschuh M."/>
            <person name="Renner C."/>
        </authorList>
    </citation>
    <scope>INTERACTION WITH BAG1</scope>
    <source>
        <tissue>T-cell</tissue>
    </source>
</reference>
<reference key="12">
    <citation type="journal article" date="2005" name="Nat. Biotechnol.">
        <title>Immunoaffinity profiling of tyrosine phosphorylation in cancer cells.</title>
        <authorList>
            <person name="Rush J."/>
            <person name="Moritz A."/>
            <person name="Lee K.A."/>
            <person name="Guo A."/>
            <person name="Goss V.L."/>
            <person name="Spek E.J."/>
            <person name="Zhang H."/>
            <person name="Zha X.-M."/>
            <person name="Polakiewicz R.D."/>
            <person name="Comb M.J."/>
        </authorList>
    </citation>
    <scope>PHOSPHORYLATION [LARGE SCALE ANALYSIS] AT TYR-167</scope>
    <scope>IDENTIFICATION BY MASS SPECTROMETRY [LARGE SCALE ANALYSIS]</scope>
</reference>
<reference key="13">
    <citation type="journal article" date="2006" name="Cell">
        <title>Global, in vivo, and site-specific phosphorylation dynamics in signaling networks.</title>
        <authorList>
            <person name="Olsen J.V."/>
            <person name="Blagoev B."/>
            <person name="Gnad F."/>
            <person name="Macek B."/>
            <person name="Kumar C."/>
            <person name="Mortensen P."/>
            <person name="Mann M."/>
        </authorList>
    </citation>
    <scope>IDENTIFICATION BY MASS SPECTROMETRY [LARGE SCALE ANALYSIS]</scope>
    <source>
        <tissue>Cervix carcinoma</tissue>
    </source>
</reference>
<reference key="14">
    <citation type="journal article" date="2008" name="J. Proteome Res.">
        <title>Phosphoproteome of resting human platelets.</title>
        <authorList>
            <person name="Zahedi R.P."/>
            <person name="Lewandrowski U."/>
            <person name="Wiesner J."/>
            <person name="Wortelkamp S."/>
            <person name="Moebius J."/>
            <person name="Schuetz C."/>
            <person name="Walter U."/>
            <person name="Gambaryan S."/>
            <person name="Sickmann A."/>
        </authorList>
    </citation>
    <scope>IDENTIFICATION BY MASS SPECTROMETRY [LARGE SCALE ANALYSIS]</scope>
    <source>
        <tissue>Platelet</tissue>
    </source>
</reference>
<reference key="15">
    <citation type="journal article" date="2008" name="Proc. Natl. Acad. Sci. U.S.A.">
        <title>A quantitative atlas of mitotic phosphorylation.</title>
        <authorList>
            <person name="Dephoure N."/>
            <person name="Zhou C."/>
            <person name="Villen J."/>
            <person name="Beausoleil S.A."/>
            <person name="Bakalarski C.E."/>
            <person name="Elledge S.J."/>
            <person name="Gygi S.P."/>
        </authorList>
    </citation>
    <scope>PHOSPHORYLATION [LARGE SCALE ANALYSIS] AT SER-219</scope>
    <scope>IDENTIFICATION BY MASS SPECTROMETRY [LARGE SCALE ANALYSIS]</scope>
    <source>
        <tissue>Cervix carcinoma</tissue>
    </source>
</reference>
<reference key="16">
    <citation type="journal article" date="2009" name="Anal. Chem.">
        <title>Lys-N and trypsin cover complementary parts of the phosphoproteome in a refined SCX-based approach.</title>
        <authorList>
            <person name="Gauci S."/>
            <person name="Helbig A.O."/>
            <person name="Slijper M."/>
            <person name="Krijgsveld J."/>
            <person name="Heck A.J."/>
            <person name="Mohammed S."/>
        </authorList>
    </citation>
    <scope>IDENTIFICATION BY MASS SPECTROMETRY [LARGE SCALE ANALYSIS]</scope>
</reference>
<reference key="17">
    <citation type="journal article" date="2010" name="Sci. Signal.">
        <title>Quantitative phosphoproteomics reveals widespread full phosphorylation site occupancy during mitosis.</title>
        <authorList>
            <person name="Olsen J.V."/>
            <person name="Vermeulen M."/>
            <person name="Santamaria A."/>
            <person name="Kumar C."/>
            <person name="Miller M.L."/>
            <person name="Jensen L.J."/>
            <person name="Gnad F."/>
            <person name="Cox J."/>
            <person name="Jensen T.S."/>
            <person name="Nigg E.A."/>
            <person name="Brunak S."/>
            <person name="Mann M."/>
        </authorList>
    </citation>
    <scope>IDENTIFICATION BY MASS SPECTROMETRY [LARGE SCALE ANALYSIS]</scope>
    <source>
        <tissue>Cervix carcinoma</tissue>
    </source>
</reference>
<reference key="18">
    <citation type="journal article" date="2011" name="BMC Syst. Biol.">
        <title>Initial characterization of the human central proteome.</title>
        <authorList>
            <person name="Burkard T.R."/>
            <person name="Planyavsky M."/>
            <person name="Kaupe I."/>
            <person name="Breitwieser F.P."/>
            <person name="Buerckstuemmer T."/>
            <person name="Bennett K.L."/>
            <person name="Superti-Furga G."/>
            <person name="Colinge J."/>
        </authorList>
    </citation>
    <scope>IDENTIFICATION BY MASS SPECTROMETRY [LARGE SCALE ANALYSIS]</scope>
</reference>
<reference key="19">
    <citation type="journal article" date="2011" name="J. Cell Biol.">
        <title>SLAIN2 links microtubule plus end-tracking proteins and controls microtubule growth in interphase.</title>
        <authorList>
            <person name="van der Vaart B."/>
            <person name="Manatschal C."/>
            <person name="Grigoriev I."/>
            <person name="Olieric V."/>
            <person name="Gouveia S.M."/>
            <person name="Bjelic S."/>
            <person name="Demmers J."/>
            <person name="Vorobjev I."/>
            <person name="Hoogenraad C.C."/>
            <person name="Steinmetz M.O."/>
            <person name="Akhmanova A."/>
        </authorList>
    </citation>
    <scope>INTERACTION WITH SLAIN1</scope>
</reference>
<reference key="20">
    <citation type="journal article" date="2011" name="Sci. Signal.">
        <title>System-wide temporal characterization of the proteome and phosphoproteome of human embryonic stem cell differentiation.</title>
        <authorList>
            <person name="Rigbolt K.T."/>
            <person name="Prokhorova T.A."/>
            <person name="Akimov V."/>
            <person name="Henningsen J."/>
            <person name="Johansen P.T."/>
            <person name="Kratchmarova I."/>
            <person name="Kassem M."/>
            <person name="Mann M."/>
            <person name="Olsen J.V."/>
            <person name="Blagoev B."/>
        </authorList>
    </citation>
    <scope>IDENTIFICATION BY MASS SPECTROMETRY [LARGE SCALE ANALYSIS]</scope>
</reference>
<reference key="21">
    <citation type="journal article" date="2012" name="Proc. Natl. Acad. Sci. U.S.A.">
        <title>N-terminal acetylome analyses and functional insights of the N-terminal acetyltransferase NatB.</title>
        <authorList>
            <person name="Van Damme P."/>
            <person name="Lasa M."/>
            <person name="Polevoda B."/>
            <person name="Gazquez C."/>
            <person name="Elosegui-Artola A."/>
            <person name="Kim D.S."/>
            <person name="De Juan-Pardo E."/>
            <person name="Demeyer K."/>
            <person name="Hole K."/>
            <person name="Larrea E."/>
            <person name="Timmerman E."/>
            <person name="Prieto J."/>
            <person name="Arnesen T."/>
            <person name="Sherman F."/>
            <person name="Gevaert K."/>
            <person name="Aldabe R."/>
        </authorList>
    </citation>
    <scope>ACETYLATION [LARGE SCALE ANALYSIS] AT ALA-2 (ISOFORM 5)</scope>
    <scope>CLEAVAGE OF INITIATOR METHIONINE [LARGE SCALE ANALYSIS] (ISOFORM 5)</scope>
    <scope>IDENTIFICATION BY MASS SPECTROMETRY [LARGE SCALE ANALYSIS]</scope>
</reference>
<reference key="22">
    <citation type="journal article" date="2012" name="Biochim. Biophys. Acta">
        <title>Plexin-B3 interacts with EB-family proteins through a conserved motif.</title>
        <authorList>
            <person name="Laht P."/>
            <person name="Pill K."/>
            <person name="Haller E."/>
            <person name="Veske A."/>
        </authorList>
    </citation>
    <scope>FUNCTION</scope>
    <scope>INTERACTION WITH PLXNB3</scope>
</reference>
<reference key="23">
    <citation type="journal article" date="2013" name="J. Proteome Res.">
        <title>Toward a comprehensive characterization of a human cancer cell phosphoproteome.</title>
        <authorList>
            <person name="Zhou H."/>
            <person name="Di Palma S."/>
            <person name="Preisinger C."/>
            <person name="Peng M."/>
            <person name="Polat A.N."/>
            <person name="Heck A.J."/>
            <person name="Mohammed S."/>
        </authorList>
    </citation>
    <scope>PHOSPHORYLATION [LARGE SCALE ANALYSIS] AT SER-9</scope>
    <scope>IDENTIFICATION BY MASS SPECTROMETRY [LARGE SCALE ANALYSIS]</scope>
    <source>
        <tissue>Cervix carcinoma</tissue>
        <tissue>Erythroleukemia</tissue>
    </source>
</reference>
<reference key="24">
    <citation type="journal article" date="2013" name="PLoS ONE">
        <title>RP1 is a phosphorylation target of CK2 and is involved in cell adhesion.</title>
        <authorList>
            <person name="Stenner F."/>
            <person name="Liewen H."/>
            <person name="Goettig S."/>
            <person name="Henschler R."/>
            <person name="Markuly N."/>
            <person name="Kleber S."/>
            <person name="Faust M."/>
            <person name="Mischo A."/>
            <person name="Bauer S."/>
            <person name="Zweifel M."/>
            <person name="Knuth A."/>
            <person name="Renner C."/>
            <person name="Wadle A."/>
        </authorList>
    </citation>
    <scope>PHOSPHORYLATION AT SER-236</scope>
    <scope>MUTAGENESIS OF SER-236</scope>
    <scope>FUNCTION</scope>
</reference>
<reference key="25">
    <citation type="journal article" date="2015" name="J. Biol. Chem.">
        <title>Regulation of Focal Adhesion Dynamics and Cell Motility by the EB2 and Hax1 Protein Complex.</title>
        <authorList>
            <person name="Liu H."/>
            <person name="Yue J."/>
            <person name="Huang H."/>
            <person name="Gou X."/>
            <person name="Chen S.Y."/>
            <person name="Zhao Y."/>
            <person name="Wu X."/>
        </authorList>
    </citation>
    <scope>FUNCTION</scope>
    <scope>INTERACTION WITH HAX1</scope>
    <scope>SUBCELLULAR LOCATION</scope>
</reference>
<reference key="26">
    <citation type="journal article" date="2016" name="Nat. Commun.">
        <title>Phosphorylation of EB2 by Aurora B and CDK1 ensures mitotic progression and genome stability.</title>
        <authorList>
            <person name="Iimori M."/>
            <person name="Watanabe S."/>
            <person name="Kiyonari S."/>
            <person name="Matsuoka K."/>
            <person name="Sakasai R."/>
            <person name="Saeki H."/>
            <person name="Oki E."/>
            <person name="Kitao H."/>
            <person name="Maehara Y."/>
        </authorList>
    </citation>
    <scope>FUNCTION</scope>
    <scope>PHOSPHORYLATION</scope>
    <scope>SUBCELLULAR LOCATION</scope>
</reference>
<reference key="27">
    <citation type="journal article" date="2015" name="Am. J. Hum. Genet.">
        <title>Mutations in Either TUBB or MAPRE2 Cause Circumferential Skin Creases Kunze Type.</title>
        <authorList>
            <person name="Isrie M."/>
            <person name="Breuss M."/>
            <person name="Tian G."/>
            <person name="Hansen A.H."/>
            <person name="Cristofoli F."/>
            <person name="Morandell J."/>
            <person name="Kupchinsky Z.A."/>
            <person name="Sifrim A."/>
            <person name="Rodriguez-Rodriguez C.M."/>
            <person name="Dapena E.P."/>
            <person name="Doonanco K."/>
            <person name="Leonard N."/>
            <person name="Tinsa F."/>
            <person name="Moortgat S."/>
            <person name="Ulucan H."/>
            <person name="Koparir E."/>
            <person name="Karaca E."/>
            <person name="Katsanis N."/>
            <person name="Marton V."/>
            <person name="Vermeesch J.R."/>
            <person name="Davis E.E."/>
            <person name="Cowan N.J."/>
            <person name="Keays D.A."/>
            <person name="Van Esch H."/>
        </authorList>
    </citation>
    <scope>INVOLVEMENT IN CSCSC2</scope>
    <scope>VARIANTS CSCSC2 SER-68; CYS-87 AND CYS-143</scope>
    <scope>CHARACTERIZATION OF VARIANTS CSCSC2 SER-68; CYS-87 AND CYS-143</scope>
    <scope>INTERACTION WITH TUBULIN</scope>
</reference>
<accession>Q15555</accession>
<accession>B2RE21</accession>
<accession>B3KR39</accession>
<accession>B4DJV4</accession>
<accession>B7Z2L3</accession>
<accession>E9PHR3</accession>
<accession>F5H1V8</accession>
<accession>G5E9I6</accession>
<accession>Q9UQ33</accession>
<proteinExistence type="evidence at protein level"/>
<organism>
    <name type="scientific">Homo sapiens</name>
    <name type="common">Human</name>
    <dbReference type="NCBI Taxonomy" id="9606"/>
    <lineage>
        <taxon>Eukaryota</taxon>
        <taxon>Metazoa</taxon>
        <taxon>Chordata</taxon>
        <taxon>Craniata</taxon>
        <taxon>Vertebrata</taxon>
        <taxon>Euteleostomi</taxon>
        <taxon>Mammalia</taxon>
        <taxon>Eutheria</taxon>
        <taxon>Euarchontoglires</taxon>
        <taxon>Primates</taxon>
        <taxon>Haplorrhini</taxon>
        <taxon>Catarrhini</taxon>
        <taxon>Hominidae</taxon>
        <taxon>Homo</taxon>
    </lineage>
</organism>
<comment type="function">
    <text evidence="1 9 10 11 13">Adapter protein that is involved in microtubule polymerization, and spindle function by stabilizing microtubules and anchoring them at centrosomes. Therefore, ensures mitotic progression and genome stability (PubMed:27030108). Acts as a central regulator of microtubule reorganization in apico-basal epithelial differentiation (By similarity). Plays a role during oocyte meiosis by regulating microtubule dynamics (By similarity). Participates in neurite growth by interacting with plexin B3/PLXNB3 and microtubule reorganization during apico-basal epithelial differentiation (PubMed:22373814). Also plays an essential role for cell migration and focal adhesion dynamics. Mechanistically, recruits HAX1 to microtubules in order to regulate focal adhesion dynamics (PubMed:26527684).</text>
</comment>
<comment type="subunit">
    <text evidence="1 5 6 7 8 11 12 14">Interacts with DCTN1. Interacts with APC (via C-terminal)(PubMed:14514668, PubMed:9233623). Interacts with monomeric and polymerized tubulin (PubMed:10188731, PubMed:14514668, PubMed:26637975). Interacts with SLAIN1 (PubMed:21646404). Interacts (via the N-terminal region) with BAG1 (PubMed:15986447). Interacts with ASB14 (By similarity). Interacts with HAX1; this interaction is essential for epidermal cell migration (PubMed:26527684).</text>
</comment>
<comment type="interaction">
    <interactant intactId="EBI-739717">
        <id>Q15555</id>
    </interactant>
    <interactant intactId="EBI-10205543">
        <id>Q9NQ79</id>
        <label>CRTAC1</label>
    </interactant>
    <organismsDiffer>false</organismsDiffer>
    <experiments>8</experiments>
</comment>
<comment type="interaction">
    <interactant intactId="EBI-739717">
        <id>Q15555</id>
    </interactant>
    <interactant intactId="EBI-742054">
        <id>Q96D03</id>
        <label>DDIT4L</label>
    </interactant>
    <organismsDiffer>false</organismsDiffer>
    <experiments>3</experiments>
</comment>
<comment type="interaction">
    <interactant intactId="EBI-739717">
        <id>Q15555</id>
    </interactant>
    <interactant intactId="EBI-7960826">
        <id>Q8NHY3</id>
        <label>GAS2L2</label>
    </interactant>
    <organismsDiffer>false</organismsDiffer>
    <experiments>5</experiments>
</comment>
<comment type="interaction">
    <interactant intactId="EBI-739717">
        <id>Q15555</id>
    </interactant>
    <interactant intactId="EBI-739696">
        <id>P25791</id>
        <label>LMO2</label>
    </interactant>
    <organismsDiffer>false</organismsDiffer>
    <experiments>6</experiments>
</comment>
<comment type="interaction">
    <interactant intactId="EBI-739717">
        <id>Q15555</id>
    </interactant>
    <interactant intactId="EBI-11959475">
        <id>P25791-3</id>
        <label>LMO2</label>
    </interactant>
    <organismsDiffer>false</organismsDiffer>
    <experiments>7</experiments>
</comment>
<comment type="interaction">
    <interactant intactId="EBI-739717">
        <id>Q15555</id>
    </interactant>
    <interactant intactId="EBI-739832">
        <id>Q8TBB1</id>
        <label>LNX1</label>
    </interactant>
    <organismsDiffer>false</organismsDiffer>
    <experiments>3</experiments>
</comment>
<comment type="interaction">
    <interactant intactId="EBI-739717">
        <id>Q15555</id>
    </interactant>
    <interactant intactId="EBI-1004115">
        <id>Q15691</id>
        <label>MAPRE1</label>
    </interactant>
    <organismsDiffer>false</organismsDiffer>
    <experiments>11</experiments>
</comment>
<comment type="interaction">
    <interactant intactId="EBI-739717">
        <id>Q15555</id>
    </interactant>
    <interactant intactId="EBI-739717">
        <id>Q15555</id>
        <label>MAPRE2</label>
    </interactant>
    <organismsDiffer>false</organismsDiffer>
    <experiments>5</experiments>
</comment>
<comment type="interaction">
    <interactant intactId="EBI-739717">
        <id>Q15555</id>
    </interactant>
    <interactant intactId="EBI-726739">
        <id>Q9UPY8</id>
        <label>MAPRE3</label>
    </interactant>
    <organismsDiffer>false</organismsDiffer>
    <experiments>9</experiments>
</comment>
<comment type="interaction">
    <interactant intactId="EBI-739717">
        <id>Q15555</id>
    </interactant>
    <interactant intactId="EBI-10236271">
        <id>Q6ZW49-2</id>
        <label>PAXIP1</label>
    </interactant>
    <organismsDiffer>false</organismsDiffer>
    <experiments>3</experiments>
</comment>
<comment type="interaction">
    <interactant intactId="EBI-739717">
        <id>Q15555</id>
    </interactant>
    <interactant intactId="EBI-14150298">
        <id>P78332-2</id>
        <label>RBM6</label>
    </interactant>
    <organismsDiffer>false</organismsDiffer>
    <experiments>3</experiments>
</comment>
<comment type="interaction">
    <interactant intactId="EBI-739717">
        <id>Q15555</id>
    </interactant>
    <interactant intactId="EBI-359224">
        <id>Q13077</id>
        <label>TRAF1</label>
    </interactant>
    <organismsDiffer>false</organismsDiffer>
    <experiments>9</experiments>
</comment>
<comment type="interaction">
    <interactant intactId="EBI-739717">
        <id>Q15555</id>
    </interactant>
    <interactant intactId="EBI-1756205">
        <id>Q9BWF2</id>
        <label>TRAIP</label>
    </interactant>
    <organismsDiffer>false</organismsDiffer>
    <experiments>10</experiments>
</comment>
<comment type="interaction">
    <interactant intactId="EBI-739717">
        <id>Q15555</id>
    </interactant>
    <interactant intactId="EBI-2932492">
        <id>Q99757</id>
        <label>TXN2</label>
    </interactant>
    <organismsDiffer>false</organismsDiffer>
    <experiments>6</experiments>
</comment>
<comment type="subcellular location">
    <subcellularLocation>
        <location evidence="5">Cytoplasm</location>
        <location evidence="5">Cytoskeleton</location>
    </subcellularLocation>
    <text>Associated with the microtubule network. Accumulates at the plus end of microtubules.</text>
</comment>
<comment type="alternative products">
    <event type="alternative splicing"/>
    <isoform>
        <id>Q15555-1</id>
        <name>1</name>
        <sequence type="displayed"/>
    </isoform>
    <isoform>
        <id>Q15555-2</id>
        <name>2</name>
        <sequence type="described" ref="VSP_012944 VSP_012945"/>
    </isoform>
    <isoform>
        <id>Q15555-3</id>
        <name>3</name>
        <sequence type="described" ref="VSP_045710"/>
    </isoform>
    <isoform>
        <id>Q15555-5</id>
        <name>5</name>
        <sequence type="described" ref="VSP_055671"/>
    </isoform>
    <isoform>
        <id>Q15555-4</id>
        <name>4</name>
        <sequence type="described" ref="VSP_046041"/>
    </isoform>
</comment>
<comment type="tissue specificity">
    <text evidence="14">Expressed in different tumor cell lines. Up-regulated in activated B- and T-lymphocytes.</text>
</comment>
<comment type="domain">
    <text>Composed of two functionally independent domains. The N-terminal domain forms a hydrophobic cleft involved in microtubule binding and the C-terminal is involved in the formation of mutually exclusive complexes with APC and DCTN1.</text>
</comment>
<comment type="PTM">
    <text evidence="10 13">Phosphorylated at Ser-236 by CK2 leading to enhanced cell adhesion (PubMed:23844040). Phosphorylated by CDK1 and AURKB during mitosis reduces the binding affinity of MAPRE2 for microtubules (PubMed:27030108).</text>
</comment>
<comment type="PTM">
    <text evidence="1">Ubiquitinated in an ASB14-dependent manner; leading to proteasomal degradation.</text>
</comment>
<comment type="disease" evidence="12">
    <disease id="DI-04629">
        <name>Skin creases, congenital symmetric circumferential, 2</name>
        <acronym>CSCSC2</acronym>
        <description>An autosomal dominant disease characterized by multiple, symmetric, circumferential rings of folded skin, affecting primarily the limbs. Affected individuals also exhibit intellectual disability, cleft palate, and dysmorphic features.</description>
        <dbReference type="MIM" id="616734"/>
    </disease>
    <text>The disease is caused by variants affecting the gene represented in this entry.</text>
</comment>
<comment type="similarity">
    <text evidence="17">Belongs to the MAPRE family.</text>
</comment>
<comment type="sequence caution" evidence="17">
    <conflict type="erroneous initiation">
        <sequence resource="EMBL-CDS" id="BAA83375"/>
    </conflict>
    <text>Truncated N-terminus.</text>
</comment>
<dbReference type="EMBL" id="X94232">
    <property type="protein sequence ID" value="CAA63923.1"/>
    <property type="molecule type" value="mRNA"/>
</dbReference>
<dbReference type="EMBL" id="AB016823">
    <property type="protein sequence ID" value="BAA83375.1"/>
    <property type="status" value="ALT_INIT"/>
    <property type="molecule type" value="mRNA"/>
</dbReference>
<dbReference type="EMBL" id="CR536545">
    <property type="protein sequence ID" value="CAG38782.1"/>
    <property type="molecule type" value="mRNA"/>
</dbReference>
<dbReference type="EMBL" id="BT020086">
    <property type="protein sequence ID" value="AAV38889.1"/>
    <property type="molecule type" value="mRNA"/>
</dbReference>
<dbReference type="EMBL" id="AK090945">
    <property type="protein sequence ID" value="BAG52251.1"/>
    <property type="molecule type" value="mRNA"/>
</dbReference>
<dbReference type="EMBL" id="AK296251">
    <property type="protein sequence ID" value="BAG58966.1"/>
    <property type="molecule type" value="mRNA"/>
</dbReference>
<dbReference type="EMBL" id="AK294833">
    <property type="protein sequence ID" value="BAH11899.1"/>
    <property type="molecule type" value="mRNA"/>
</dbReference>
<dbReference type="EMBL" id="AK315766">
    <property type="protein sequence ID" value="BAG38118.1"/>
    <property type="molecule type" value="mRNA"/>
</dbReference>
<dbReference type="EMBL" id="AC009277">
    <property type="status" value="NOT_ANNOTATED_CDS"/>
    <property type="molecule type" value="Genomic_DNA"/>
</dbReference>
<dbReference type="EMBL" id="AC015967">
    <property type="status" value="NOT_ANNOTATED_CDS"/>
    <property type="molecule type" value="Genomic_DNA"/>
</dbReference>
<dbReference type="EMBL" id="CH471088">
    <property type="protein sequence ID" value="EAX01336.1"/>
    <property type="molecule type" value="Genomic_DNA"/>
</dbReference>
<dbReference type="EMBL" id="CH471088">
    <property type="protein sequence ID" value="EAX01338.1"/>
    <property type="molecule type" value="Genomic_DNA"/>
</dbReference>
<dbReference type="EMBL" id="BC007318">
    <property type="protein sequence ID" value="AAH07318.1"/>
    <property type="molecule type" value="mRNA"/>
</dbReference>
<dbReference type="CCDS" id="CCDS11910.1">
    <molecule id="Q15555-1"/>
</dbReference>
<dbReference type="CCDS" id="CCDS45850.1">
    <molecule id="Q15555-3"/>
</dbReference>
<dbReference type="CCDS" id="CCDS45851.1">
    <molecule id="Q15555-5"/>
</dbReference>
<dbReference type="CCDS" id="CCDS58619.1">
    <molecule id="Q15555-4"/>
</dbReference>
<dbReference type="PIR" id="G01037">
    <property type="entry name" value="G01037"/>
</dbReference>
<dbReference type="RefSeq" id="NP_001137298.1">
    <molecule id="Q15555-5"/>
    <property type="nucleotide sequence ID" value="NM_001143826.3"/>
</dbReference>
<dbReference type="RefSeq" id="NP_001137299.1">
    <molecule id="Q15555-3"/>
    <property type="nucleotide sequence ID" value="NM_001143827.3"/>
</dbReference>
<dbReference type="RefSeq" id="NP_001243349.1">
    <molecule id="Q15555-4"/>
    <property type="nucleotide sequence ID" value="NM_001256420.2"/>
</dbReference>
<dbReference type="RefSeq" id="NP_055083.1">
    <molecule id="Q15555-1"/>
    <property type="nucleotide sequence ID" value="NM_014268.4"/>
</dbReference>
<dbReference type="SMR" id="Q15555"/>
<dbReference type="BioGRID" id="116178">
    <property type="interactions" value="130"/>
</dbReference>
<dbReference type="FunCoup" id="Q15555">
    <property type="interactions" value="548"/>
</dbReference>
<dbReference type="IntAct" id="Q15555">
    <property type="interactions" value="71"/>
</dbReference>
<dbReference type="MINT" id="Q15555"/>
<dbReference type="STRING" id="9606.ENSP00000300249"/>
<dbReference type="Allergome" id="8363">
    <property type="allergen name" value="Hom s RP1"/>
</dbReference>
<dbReference type="GlyCosmos" id="Q15555">
    <property type="glycosylation" value="1 site, 1 glycan"/>
</dbReference>
<dbReference type="GlyGen" id="Q15555">
    <property type="glycosylation" value="3 sites, 1 O-linked glycan (1 site)"/>
</dbReference>
<dbReference type="iPTMnet" id="Q15555"/>
<dbReference type="PhosphoSitePlus" id="Q15555"/>
<dbReference type="SwissPalm" id="Q15555"/>
<dbReference type="BioMuta" id="MAPRE2"/>
<dbReference type="DMDM" id="60390165"/>
<dbReference type="OGP" id="Q15555"/>
<dbReference type="jPOST" id="Q15555"/>
<dbReference type="MassIVE" id="Q15555"/>
<dbReference type="PaxDb" id="9606-ENSP00000300249"/>
<dbReference type="PeptideAtlas" id="Q15555"/>
<dbReference type="ProteomicsDB" id="20585"/>
<dbReference type="ProteomicsDB" id="25777"/>
<dbReference type="ProteomicsDB" id="33949"/>
<dbReference type="ProteomicsDB" id="60631">
    <molecule id="Q15555-1"/>
</dbReference>
<dbReference type="ProteomicsDB" id="60632">
    <molecule id="Q15555-2"/>
</dbReference>
<dbReference type="Pumba" id="Q15555"/>
<dbReference type="Antibodypedia" id="8544">
    <property type="antibodies" value="437 antibodies from 31 providers"/>
</dbReference>
<dbReference type="DNASU" id="10982"/>
<dbReference type="Ensembl" id="ENST00000300249.10">
    <molecule id="Q15555-1"/>
    <property type="protein sequence ID" value="ENSP00000300249.4"/>
    <property type="gene ID" value="ENSG00000166974.13"/>
</dbReference>
<dbReference type="Ensembl" id="ENST00000413393.5">
    <molecule id="Q15555-5"/>
    <property type="protein sequence ID" value="ENSP00000396074.1"/>
    <property type="gene ID" value="ENSG00000166974.13"/>
</dbReference>
<dbReference type="Ensembl" id="ENST00000436190.6">
    <molecule id="Q15555-3"/>
    <property type="protein sequence ID" value="ENSP00000407723.1"/>
    <property type="gene ID" value="ENSG00000166974.13"/>
</dbReference>
<dbReference type="Ensembl" id="ENST00000538170.6">
    <molecule id="Q15555-4"/>
    <property type="protein sequence ID" value="ENSP00000446343.1"/>
    <property type="gene ID" value="ENSG00000166974.13"/>
</dbReference>
<dbReference type="Ensembl" id="ENST00000588910.5">
    <molecule id="Q15555-2"/>
    <property type="protein sequence ID" value="ENSP00000468588.1"/>
    <property type="gene ID" value="ENSG00000166974.13"/>
</dbReference>
<dbReference type="Ensembl" id="ENST00000589699.1">
    <molecule id="Q15555-5"/>
    <property type="protein sequence ID" value="ENSP00000464921.1"/>
    <property type="gene ID" value="ENSG00000166974.13"/>
</dbReference>
<dbReference type="GeneID" id="10982"/>
<dbReference type="KEGG" id="hsa:10982"/>
<dbReference type="MANE-Select" id="ENST00000300249.10">
    <property type="protein sequence ID" value="ENSP00000300249.4"/>
    <property type="RefSeq nucleotide sequence ID" value="NM_014268.4"/>
    <property type="RefSeq protein sequence ID" value="NP_055083.1"/>
</dbReference>
<dbReference type="UCSC" id="uc002kyf.3">
    <molecule id="Q15555-1"/>
    <property type="organism name" value="human"/>
</dbReference>
<dbReference type="AGR" id="HGNC:6891"/>
<dbReference type="CTD" id="10982"/>
<dbReference type="DisGeNET" id="10982"/>
<dbReference type="GeneCards" id="MAPRE2"/>
<dbReference type="HGNC" id="HGNC:6891">
    <property type="gene designation" value="MAPRE2"/>
</dbReference>
<dbReference type="HPA" id="ENSG00000166974">
    <property type="expression patterns" value="Tissue enhanced (brain)"/>
</dbReference>
<dbReference type="MalaCards" id="MAPRE2"/>
<dbReference type="MIM" id="605789">
    <property type="type" value="gene"/>
</dbReference>
<dbReference type="MIM" id="616734">
    <property type="type" value="phenotype"/>
</dbReference>
<dbReference type="neXtProt" id="NX_Q15555"/>
<dbReference type="OpenTargets" id="ENSG00000166974"/>
<dbReference type="Orphanet" id="2505">
    <property type="disease" value="Multiple benign circumferential skin creases on limbs"/>
</dbReference>
<dbReference type="PharmGKB" id="PA30635"/>
<dbReference type="VEuPathDB" id="HostDB:ENSG00000166974"/>
<dbReference type="eggNOG" id="KOG3000">
    <property type="taxonomic scope" value="Eukaryota"/>
</dbReference>
<dbReference type="GeneTree" id="ENSGT00490000043329"/>
<dbReference type="HOGENOM" id="CLU_041744_1_0_1"/>
<dbReference type="InParanoid" id="Q15555"/>
<dbReference type="OMA" id="WIKRFWD"/>
<dbReference type="OrthoDB" id="2119228at2759"/>
<dbReference type="PAN-GO" id="Q15555">
    <property type="GO annotations" value="8 GO annotations based on evolutionary models"/>
</dbReference>
<dbReference type="PhylomeDB" id="Q15555"/>
<dbReference type="TreeFam" id="TF313620"/>
<dbReference type="PathwayCommons" id="Q15555"/>
<dbReference type="SignaLink" id="Q15555"/>
<dbReference type="BioGRID-ORCS" id="10982">
    <property type="hits" value="8 hits in 1157 CRISPR screens"/>
</dbReference>
<dbReference type="CD-CODE" id="DEE660B4">
    <property type="entry name" value="Stress granule"/>
</dbReference>
<dbReference type="CD-CODE" id="FB4E32DD">
    <property type="entry name" value="Presynaptic clusters and postsynaptic densities"/>
</dbReference>
<dbReference type="ChiTaRS" id="MAPRE2">
    <property type="organism name" value="human"/>
</dbReference>
<dbReference type="GeneWiki" id="MAPRE2"/>
<dbReference type="GenomeRNAi" id="10982"/>
<dbReference type="Pharos" id="Q15555">
    <property type="development level" value="Tbio"/>
</dbReference>
<dbReference type="PRO" id="PR:Q15555"/>
<dbReference type="Proteomes" id="UP000005640">
    <property type="component" value="Chromosome 18"/>
</dbReference>
<dbReference type="RNAct" id="Q15555">
    <property type="molecule type" value="protein"/>
</dbReference>
<dbReference type="Bgee" id="ENSG00000166974">
    <property type="expression patterns" value="Expressed in cortical plate and 213 other cell types or tissues"/>
</dbReference>
<dbReference type="ExpressionAtlas" id="Q15555">
    <property type="expression patterns" value="baseline and differential"/>
</dbReference>
<dbReference type="GO" id="GO:0005737">
    <property type="term" value="C:cytoplasm"/>
    <property type="evidence" value="ECO:0007005"/>
    <property type="project" value="UniProtKB"/>
</dbReference>
<dbReference type="GO" id="GO:0005881">
    <property type="term" value="C:cytoplasmic microtubule"/>
    <property type="evidence" value="ECO:0000318"/>
    <property type="project" value="GO_Central"/>
</dbReference>
<dbReference type="GO" id="GO:0005925">
    <property type="term" value="C:focal adhesion"/>
    <property type="evidence" value="ECO:0000314"/>
    <property type="project" value="ARUK-UCL"/>
</dbReference>
<dbReference type="GO" id="GO:0015630">
    <property type="term" value="C:microtubule cytoskeleton"/>
    <property type="evidence" value="ECO:0000314"/>
    <property type="project" value="LIFEdb"/>
</dbReference>
<dbReference type="GO" id="GO:0005815">
    <property type="term" value="C:microtubule organizing center"/>
    <property type="evidence" value="ECO:0000318"/>
    <property type="project" value="GO_Central"/>
</dbReference>
<dbReference type="GO" id="GO:0035371">
    <property type="term" value="C:microtubule plus-end"/>
    <property type="evidence" value="ECO:0000318"/>
    <property type="project" value="GO_Central"/>
</dbReference>
<dbReference type="GO" id="GO:0051233">
    <property type="term" value="C:spindle midzone"/>
    <property type="evidence" value="ECO:0000318"/>
    <property type="project" value="GO_Central"/>
</dbReference>
<dbReference type="GO" id="GO:0042802">
    <property type="term" value="F:identical protein binding"/>
    <property type="evidence" value="ECO:0000353"/>
    <property type="project" value="IntAct"/>
</dbReference>
<dbReference type="GO" id="GO:0008017">
    <property type="term" value="F:microtubule binding"/>
    <property type="evidence" value="ECO:0000314"/>
    <property type="project" value="ARUK-UCL"/>
</dbReference>
<dbReference type="GO" id="GO:0051010">
    <property type="term" value="F:microtubule plus-end binding"/>
    <property type="evidence" value="ECO:0000318"/>
    <property type="project" value="GO_Central"/>
</dbReference>
<dbReference type="GO" id="GO:0019901">
    <property type="term" value="F:protein kinase binding"/>
    <property type="evidence" value="ECO:0007669"/>
    <property type="project" value="Ensembl"/>
</dbReference>
<dbReference type="GO" id="GO:0051301">
    <property type="term" value="P:cell division"/>
    <property type="evidence" value="ECO:0007669"/>
    <property type="project" value="UniProtKB-KW"/>
</dbReference>
<dbReference type="GO" id="GO:0032014">
    <property type="term" value="P:positive regulation of ARF protein signal transduction"/>
    <property type="evidence" value="ECO:0000250"/>
    <property type="project" value="ARUK-UCL"/>
</dbReference>
<dbReference type="GO" id="GO:0120183">
    <property type="term" value="P:positive regulation of focal adhesion disassembly"/>
    <property type="evidence" value="ECO:0000250"/>
    <property type="project" value="ARUK-UCL"/>
</dbReference>
<dbReference type="GO" id="GO:0051549">
    <property type="term" value="P:positive regulation of keratinocyte migration"/>
    <property type="evidence" value="ECO:0000250"/>
    <property type="project" value="ARUK-UCL"/>
</dbReference>
<dbReference type="GO" id="GO:0035372">
    <property type="term" value="P:protein localization to microtubule"/>
    <property type="evidence" value="ECO:0000318"/>
    <property type="project" value="GO_Central"/>
</dbReference>
<dbReference type="GO" id="GO:0031110">
    <property type="term" value="P:regulation of microtubule polymerization or depolymerization"/>
    <property type="evidence" value="ECO:0000318"/>
    <property type="project" value="GO_Central"/>
</dbReference>
<dbReference type="GO" id="GO:0051225">
    <property type="term" value="P:spindle assembly"/>
    <property type="evidence" value="ECO:0000318"/>
    <property type="project" value="GO_Central"/>
</dbReference>
<dbReference type="FunFam" id="1.20.5.1430:FF:000002">
    <property type="entry name" value="microtubule-associated protein RP/EB family member 2 isoform X1"/>
    <property type="match status" value="1"/>
</dbReference>
<dbReference type="FunFam" id="1.10.418.10:FF:000007">
    <property type="entry name" value="Microtubule-associated protein, RP/EB family, member 2"/>
    <property type="match status" value="1"/>
</dbReference>
<dbReference type="Gene3D" id="1.20.5.1430">
    <property type="match status" value="1"/>
</dbReference>
<dbReference type="Gene3D" id="1.10.418.10">
    <property type="entry name" value="Calponin-like domain"/>
    <property type="match status" value="1"/>
</dbReference>
<dbReference type="InterPro" id="IPR001715">
    <property type="entry name" value="CH_dom"/>
</dbReference>
<dbReference type="InterPro" id="IPR036872">
    <property type="entry name" value="CH_dom_sf"/>
</dbReference>
<dbReference type="InterPro" id="IPR004953">
    <property type="entry name" value="EB1_C"/>
</dbReference>
<dbReference type="InterPro" id="IPR036133">
    <property type="entry name" value="EB1_C_sf"/>
</dbReference>
<dbReference type="InterPro" id="IPR027328">
    <property type="entry name" value="MAPRE"/>
</dbReference>
<dbReference type="PANTHER" id="PTHR10623">
    <property type="entry name" value="MICROTUBULE-ASSOCIATED PROTEIN RP/EB FAMILY MEMBER"/>
    <property type="match status" value="1"/>
</dbReference>
<dbReference type="Pfam" id="PF00307">
    <property type="entry name" value="CH"/>
    <property type="match status" value="1"/>
</dbReference>
<dbReference type="Pfam" id="PF03271">
    <property type="entry name" value="EB1"/>
    <property type="match status" value="1"/>
</dbReference>
<dbReference type="SUPFAM" id="SSF47576">
    <property type="entry name" value="Calponin-homology domain, CH-domain"/>
    <property type="match status" value="1"/>
</dbReference>
<dbReference type="SUPFAM" id="SSF140612">
    <property type="entry name" value="EB1 dimerisation domain-like"/>
    <property type="match status" value="1"/>
</dbReference>
<dbReference type="PROSITE" id="PS50021">
    <property type="entry name" value="CH"/>
    <property type="match status" value="1"/>
</dbReference>
<dbReference type="PROSITE" id="PS51230">
    <property type="entry name" value="EB1_C"/>
    <property type="match status" value="1"/>
</dbReference>
<name>MARE2_HUMAN</name>
<evidence type="ECO:0000250" key="1">
    <source>
        <dbReference type="UniProtKB" id="Q8R001"/>
    </source>
</evidence>
<evidence type="ECO:0000255" key="2">
    <source>
        <dbReference type="PROSITE-ProRule" id="PRU00044"/>
    </source>
</evidence>
<evidence type="ECO:0000255" key="3">
    <source>
        <dbReference type="PROSITE-ProRule" id="PRU00576"/>
    </source>
</evidence>
<evidence type="ECO:0000256" key="4">
    <source>
        <dbReference type="SAM" id="MobiDB-lite"/>
    </source>
</evidence>
<evidence type="ECO:0000269" key="5">
    <source>
    </source>
</evidence>
<evidence type="ECO:0000269" key="6">
    <source>
    </source>
</evidence>
<evidence type="ECO:0000269" key="7">
    <source>
    </source>
</evidence>
<evidence type="ECO:0000269" key="8">
    <source>
    </source>
</evidence>
<evidence type="ECO:0000269" key="9">
    <source>
    </source>
</evidence>
<evidence type="ECO:0000269" key="10">
    <source>
    </source>
</evidence>
<evidence type="ECO:0000269" key="11">
    <source>
    </source>
</evidence>
<evidence type="ECO:0000269" key="12">
    <source>
    </source>
</evidence>
<evidence type="ECO:0000269" key="13">
    <source>
    </source>
</evidence>
<evidence type="ECO:0000269" key="14">
    <source>
    </source>
</evidence>
<evidence type="ECO:0000303" key="15">
    <source>
    </source>
</evidence>
<evidence type="ECO:0000303" key="16">
    <source ref="2"/>
</evidence>
<evidence type="ECO:0000305" key="17"/>
<evidence type="ECO:0007744" key="18">
    <source>
    </source>
</evidence>
<evidence type="ECO:0007744" key="19">
    <source>
    </source>
</evidence>
<evidence type="ECO:0007744" key="20">
    <source>
    </source>
</evidence>
<evidence type="ECO:0007744" key="21">
    <source>
    </source>
</evidence>
<sequence>MPGPTQTLSPNGENNNDIIQDNNGTIIPFRKHTVRGERSYSWGMAVNVYSTSITQETMSRHDIIAWVNDIVSLNYTKVEQLCSGAAYCQFMDMLFPGCISLKKVKFQAKLEHEYIHNFKLLQASFKRMNVDKVIPVEKLVKGRFQDNLDFIQWFKKFYDANYDGKEYDPVEARQGQDAIPPPDPGEQIFNLPKKSHHANSPTAGAAKSSPAAKPGSTPSRPSSAKRASSSGSASKSDKDLETQVIQLNEQVHSLKLALEGVEKERDFYFGKLREIELLCQEHGQENDDLVQRLMDILYASEEHEGHTEEPEAEEQAHEQQPPQQEEY</sequence>
<protein>
    <recommendedName>
        <fullName>Microtubule-associated protein RP/EB family member 2</fullName>
    </recommendedName>
    <alternativeName>
        <fullName>APC-binding protein EB2</fullName>
    </alternativeName>
    <alternativeName>
        <fullName>End-binding protein 2</fullName>
        <shortName>EB2</shortName>
    </alternativeName>
</protein>
<feature type="chain" id="PRO_0000213424" description="Microtubule-associated protein RP/EB family member 2">
    <location>
        <begin position="1"/>
        <end position="327"/>
    </location>
</feature>
<feature type="domain" description="Calponin-homology (CH)" evidence="2">
    <location>
        <begin position="57"/>
        <end position="159"/>
    </location>
</feature>
<feature type="domain" description="EB1 C-terminal" evidence="3">
    <location>
        <begin position="236"/>
        <end position="306"/>
    </location>
</feature>
<feature type="region of interest" description="Disordered" evidence="4">
    <location>
        <begin position="1"/>
        <end position="21"/>
    </location>
</feature>
<feature type="region of interest" description="Disordered" evidence="4">
    <location>
        <begin position="171"/>
        <end position="240"/>
    </location>
</feature>
<feature type="region of interest" description="DCTN1-binding">
    <location>
        <begin position="187"/>
        <end position="327"/>
    </location>
</feature>
<feature type="region of interest" description="APC-binding">
    <location>
        <begin position="259"/>
        <end position="302"/>
    </location>
</feature>
<feature type="region of interest" description="Disordered" evidence="4">
    <location>
        <begin position="299"/>
        <end position="327"/>
    </location>
</feature>
<feature type="compositionally biased region" description="Low complexity" evidence="4">
    <location>
        <begin position="200"/>
        <end position="234"/>
    </location>
</feature>
<feature type="compositionally biased region" description="Basic and acidic residues" evidence="4">
    <location>
        <begin position="300"/>
        <end position="317"/>
    </location>
</feature>
<feature type="compositionally biased region" description="Low complexity" evidence="4">
    <location>
        <begin position="318"/>
        <end position="327"/>
    </location>
</feature>
<feature type="modified residue" description="Phosphoserine" evidence="21">
    <location>
        <position position="9"/>
    </location>
</feature>
<feature type="modified residue" description="Phosphotyrosine" evidence="18">
    <location>
        <position position="167"/>
    </location>
</feature>
<feature type="modified residue" description="Phosphoserine" evidence="19">
    <location>
        <position position="219"/>
    </location>
</feature>
<feature type="modified residue" description="Phosphoserine" evidence="10">
    <location>
        <position position="236"/>
    </location>
</feature>
<feature type="splice variant" id="VSP_046041" description="In isoform 4." evidence="15">
    <original>MPGPTQTLSPNGENNNDIIQDNNGTIIPFRKHTVRGERSYSWGMAVNVYSTSITQETMSRHDIIAWVNDIVSLNYTKVEQLCS</original>
    <variation>MARTTTTSSRIITGPSFLSGSTQCAGSVPT</variation>
    <location>
        <begin position="1"/>
        <end position="83"/>
    </location>
</feature>
<feature type="splice variant" id="VSP_055671" description="In isoform 5." evidence="15">
    <location>
        <begin position="1"/>
        <end position="43"/>
    </location>
</feature>
<feature type="splice variant" id="VSP_045710" description="In isoform 3." evidence="15">
    <original>MPGPTQTLSPNGENNNDIIQDNNGTIIPFRKHTVRGERSY</original>
    <variation>MKQNRDQKCPVSQRNSSFQQPGRKPGCS</variation>
    <location>
        <begin position="1"/>
        <end position="40"/>
    </location>
</feature>
<feature type="splice variant" id="VSP_012944" description="In isoform 2." evidence="16">
    <original>HSLKLALE</original>
    <variation>MHQLWPRL</variation>
    <location>
        <begin position="252"/>
        <end position="259"/>
    </location>
</feature>
<feature type="splice variant" id="VSP_012945" description="In isoform 2." evidence="16">
    <location>
        <begin position="260"/>
        <end position="327"/>
    </location>
</feature>
<feature type="sequence variant" id="VAR_076540" description="In CSCSC2; enhances binding to microtubules; dbSNP:rs864309719." evidence="12">
    <original>N</original>
    <variation>S</variation>
    <location>
        <position position="68"/>
    </location>
</feature>
<feature type="sequence variant" id="VAR_076541" description="In CSCSC2; enhances binding to microtubules; dbSNP:rs864309717." evidence="12">
    <original>Y</original>
    <variation>C</variation>
    <location>
        <position position="87"/>
    </location>
</feature>
<feature type="sequence variant" id="VAR_076542" description="In CSCSC2; enhances binding to microtubules; dbSNP:rs864309720." evidence="12">
    <original>R</original>
    <variation>C</variation>
    <location>
        <position position="143"/>
    </location>
</feature>
<feature type="sequence variant" id="VAR_050018" description="In dbSNP:rs11538993.">
    <original>Y</original>
    <variation>C</variation>
    <location>
        <position position="162"/>
    </location>
</feature>
<feature type="mutagenesis site" description="Significant loss of phosphorylation and cell adhesion activity." evidence="10">
    <original>S</original>
    <variation>A</variation>
    <location>
        <position position="236"/>
    </location>
</feature>
<feature type="sequence conflict" description="In Ref. 8; BAA83375." evidence="17" ref="8">
    <original>A</original>
    <variation>G</variation>
    <location>
        <position position="65"/>
    </location>
</feature>
<feature type="sequence conflict" description="In Ref. 5; BAG58966." evidence="17" ref="5">
    <original>S</original>
    <variation>N</variation>
    <location>
        <position position="100"/>
    </location>
</feature>
<feature type="sequence conflict" description="In Ref. 5; BAG58966." evidence="17" ref="5">
    <original>M</original>
    <variation>K</variation>
    <location>
        <position position="128"/>
    </location>
</feature>
<feature type="sequence conflict" description="In Ref. 5; BAG52251." evidence="17" ref="5">
    <original>S</original>
    <variation>G</variation>
    <location>
        <position position="209"/>
    </location>
</feature>
<feature type="sequence conflict" description="In Ref. 5; BAH11899." evidence="17" ref="5">
    <original>K</original>
    <variation>I</variation>
    <location>
        <position position="235"/>
    </location>
</feature>
<feature type="initiator methionine" description="Removed" evidence="20">
    <location sequence="Q15555-5">
        <position position="1"/>
    </location>
</feature>
<feature type="modified residue" description="N-acetylalanine" evidence="20">
    <location sequence="Q15555-5">
        <position position="2"/>
    </location>
</feature>
<gene>
    <name type="primary">MAPRE2</name>
    <name type="synonym">RP1</name>
</gene>